<reference key="1">
    <citation type="journal article" date="2009" name="Genome Biol.">
        <title>Genomic and genetic analyses of diversity and plant interactions of Pseudomonas fluorescens.</title>
        <authorList>
            <person name="Silby M.W."/>
            <person name="Cerdeno-Tarraga A.M."/>
            <person name="Vernikos G.S."/>
            <person name="Giddens S.R."/>
            <person name="Jackson R.W."/>
            <person name="Preston G.M."/>
            <person name="Zhang X.-X."/>
            <person name="Moon C.D."/>
            <person name="Gehrig S.M."/>
            <person name="Godfrey S.A.C."/>
            <person name="Knight C.G."/>
            <person name="Malone J.G."/>
            <person name="Robinson Z."/>
            <person name="Spiers A.J."/>
            <person name="Harris S."/>
            <person name="Challis G.L."/>
            <person name="Yaxley A.M."/>
            <person name="Harris D."/>
            <person name="Seeger K."/>
            <person name="Murphy L."/>
            <person name="Rutter S."/>
            <person name="Squares R."/>
            <person name="Quail M.A."/>
            <person name="Saunders E."/>
            <person name="Mavromatis K."/>
            <person name="Brettin T.S."/>
            <person name="Bentley S.D."/>
            <person name="Hothersall J."/>
            <person name="Stephens E."/>
            <person name="Thomas C.M."/>
            <person name="Parkhill J."/>
            <person name="Levy S.B."/>
            <person name="Rainey P.B."/>
            <person name="Thomson N.R."/>
        </authorList>
    </citation>
    <scope>NUCLEOTIDE SEQUENCE [LARGE SCALE GENOMIC DNA]</scope>
    <source>
        <strain>Pf0-1</strain>
    </source>
</reference>
<gene>
    <name evidence="1" type="primary">rph</name>
    <name type="ordered locus">Pfl01_5547</name>
</gene>
<evidence type="ECO:0000255" key="1">
    <source>
        <dbReference type="HAMAP-Rule" id="MF_00564"/>
    </source>
</evidence>
<proteinExistence type="inferred from homology"/>
<name>RNPH_PSEPF</name>
<keyword id="KW-0548">Nucleotidyltransferase</keyword>
<keyword id="KW-0694">RNA-binding</keyword>
<keyword id="KW-0698">rRNA processing</keyword>
<keyword id="KW-0808">Transferase</keyword>
<keyword id="KW-0819">tRNA processing</keyword>
<keyword id="KW-0820">tRNA-binding</keyword>
<accession>Q3K4M0</accession>
<protein>
    <recommendedName>
        <fullName evidence="1">Ribonuclease PH</fullName>
        <shortName evidence="1">RNase PH</shortName>
        <ecNumber evidence="1">2.7.7.56</ecNumber>
    </recommendedName>
    <alternativeName>
        <fullName evidence="1">tRNA nucleotidyltransferase</fullName>
    </alternativeName>
</protein>
<organism>
    <name type="scientific">Pseudomonas fluorescens (strain Pf0-1)</name>
    <dbReference type="NCBI Taxonomy" id="205922"/>
    <lineage>
        <taxon>Bacteria</taxon>
        <taxon>Pseudomonadati</taxon>
        <taxon>Pseudomonadota</taxon>
        <taxon>Gammaproteobacteria</taxon>
        <taxon>Pseudomonadales</taxon>
        <taxon>Pseudomonadaceae</taxon>
        <taxon>Pseudomonas</taxon>
    </lineage>
</organism>
<dbReference type="EC" id="2.7.7.56" evidence="1"/>
<dbReference type="EMBL" id="CP000094">
    <property type="protein sequence ID" value="ABA77284.1"/>
    <property type="molecule type" value="Genomic_DNA"/>
</dbReference>
<dbReference type="RefSeq" id="WP_011336559.1">
    <property type="nucleotide sequence ID" value="NC_007492.2"/>
</dbReference>
<dbReference type="SMR" id="Q3K4M0"/>
<dbReference type="KEGG" id="pfo:Pfl01_5547"/>
<dbReference type="eggNOG" id="COG0689">
    <property type="taxonomic scope" value="Bacteria"/>
</dbReference>
<dbReference type="HOGENOM" id="CLU_050858_0_0_6"/>
<dbReference type="Proteomes" id="UP000002704">
    <property type="component" value="Chromosome"/>
</dbReference>
<dbReference type="GO" id="GO:0000175">
    <property type="term" value="F:3'-5'-RNA exonuclease activity"/>
    <property type="evidence" value="ECO:0007669"/>
    <property type="project" value="UniProtKB-UniRule"/>
</dbReference>
<dbReference type="GO" id="GO:0000049">
    <property type="term" value="F:tRNA binding"/>
    <property type="evidence" value="ECO:0007669"/>
    <property type="project" value="UniProtKB-UniRule"/>
</dbReference>
<dbReference type="GO" id="GO:0009022">
    <property type="term" value="F:tRNA nucleotidyltransferase activity"/>
    <property type="evidence" value="ECO:0007669"/>
    <property type="project" value="UniProtKB-UniRule"/>
</dbReference>
<dbReference type="GO" id="GO:0016075">
    <property type="term" value="P:rRNA catabolic process"/>
    <property type="evidence" value="ECO:0007669"/>
    <property type="project" value="UniProtKB-UniRule"/>
</dbReference>
<dbReference type="GO" id="GO:0006364">
    <property type="term" value="P:rRNA processing"/>
    <property type="evidence" value="ECO:0007669"/>
    <property type="project" value="UniProtKB-KW"/>
</dbReference>
<dbReference type="GO" id="GO:0008033">
    <property type="term" value="P:tRNA processing"/>
    <property type="evidence" value="ECO:0007669"/>
    <property type="project" value="UniProtKB-UniRule"/>
</dbReference>
<dbReference type="CDD" id="cd11362">
    <property type="entry name" value="RNase_PH_bact"/>
    <property type="match status" value="1"/>
</dbReference>
<dbReference type="FunFam" id="3.30.230.70:FF:000003">
    <property type="entry name" value="Ribonuclease PH"/>
    <property type="match status" value="1"/>
</dbReference>
<dbReference type="Gene3D" id="3.30.230.70">
    <property type="entry name" value="GHMP Kinase, N-terminal domain"/>
    <property type="match status" value="1"/>
</dbReference>
<dbReference type="HAMAP" id="MF_00564">
    <property type="entry name" value="RNase_PH"/>
    <property type="match status" value="1"/>
</dbReference>
<dbReference type="InterPro" id="IPR001247">
    <property type="entry name" value="ExoRNase_PH_dom1"/>
</dbReference>
<dbReference type="InterPro" id="IPR015847">
    <property type="entry name" value="ExoRNase_PH_dom2"/>
</dbReference>
<dbReference type="InterPro" id="IPR036345">
    <property type="entry name" value="ExoRNase_PH_dom2_sf"/>
</dbReference>
<dbReference type="InterPro" id="IPR027408">
    <property type="entry name" value="PNPase/RNase_PH_dom_sf"/>
</dbReference>
<dbReference type="InterPro" id="IPR020568">
    <property type="entry name" value="Ribosomal_Su5_D2-typ_SF"/>
</dbReference>
<dbReference type="InterPro" id="IPR050080">
    <property type="entry name" value="RNase_PH"/>
</dbReference>
<dbReference type="InterPro" id="IPR002381">
    <property type="entry name" value="RNase_PH_bac-type"/>
</dbReference>
<dbReference type="InterPro" id="IPR018336">
    <property type="entry name" value="RNase_PH_CS"/>
</dbReference>
<dbReference type="NCBIfam" id="TIGR01966">
    <property type="entry name" value="RNasePH"/>
    <property type="match status" value="1"/>
</dbReference>
<dbReference type="PANTHER" id="PTHR11953">
    <property type="entry name" value="EXOSOME COMPLEX COMPONENT"/>
    <property type="match status" value="1"/>
</dbReference>
<dbReference type="PANTHER" id="PTHR11953:SF0">
    <property type="entry name" value="EXOSOME COMPLEX COMPONENT RRP41"/>
    <property type="match status" value="1"/>
</dbReference>
<dbReference type="Pfam" id="PF01138">
    <property type="entry name" value="RNase_PH"/>
    <property type="match status" value="1"/>
</dbReference>
<dbReference type="Pfam" id="PF03725">
    <property type="entry name" value="RNase_PH_C"/>
    <property type="match status" value="1"/>
</dbReference>
<dbReference type="SUPFAM" id="SSF55666">
    <property type="entry name" value="Ribonuclease PH domain 2-like"/>
    <property type="match status" value="1"/>
</dbReference>
<dbReference type="SUPFAM" id="SSF54211">
    <property type="entry name" value="Ribosomal protein S5 domain 2-like"/>
    <property type="match status" value="1"/>
</dbReference>
<dbReference type="PROSITE" id="PS01277">
    <property type="entry name" value="RIBONUCLEASE_PH"/>
    <property type="match status" value="1"/>
</dbReference>
<comment type="function">
    <text evidence="1">Phosphorolytic 3'-5' exoribonuclease that plays an important role in tRNA 3'-end maturation. Removes nucleotide residues following the 3'-CCA terminus of tRNAs; can also add nucleotides to the ends of RNA molecules by using nucleoside diphosphates as substrates, but this may not be physiologically important. Probably plays a role in initiation of 16S rRNA degradation (leading to ribosome degradation) during starvation.</text>
</comment>
<comment type="catalytic activity">
    <reaction evidence="1">
        <text>tRNA(n+1) + phosphate = tRNA(n) + a ribonucleoside 5'-diphosphate</text>
        <dbReference type="Rhea" id="RHEA:10628"/>
        <dbReference type="Rhea" id="RHEA-COMP:17343"/>
        <dbReference type="Rhea" id="RHEA-COMP:17344"/>
        <dbReference type="ChEBI" id="CHEBI:43474"/>
        <dbReference type="ChEBI" id="CHEBI:57930"/>
        <dbReference type="ChEBI" id="CHEBI:173114"/>
        <dbReference type="EC" id="2.7.7.56"/>
    </reaction>
</comment>
<comment type="subunit">
    <text evidence="1">Homohexameric ring arranged as a trimer of dimers.</text>
</comment>
<comment type="similarity">
    <text evidence="1">Belongs to the RNase PH family.</text>
</comment>
<feature type="chain" id="PRO_1000024853" description="Ribonuclease PH">
    <location>
        <begin position="1"/>
        <end position="240"/>
    </location>
</feature>
<feature type="binding site" evidence="1">
    <location>
        <position position="87"/>
    </location>
    <ligand>
        <name>phosphate</name>
        <dbReference type="ChEBI" id="CHEBI:43474"/>
        <note>substrate</note>
    </ligand>
</feature>
<feature type="binding site" evidence="1">
    <location>
        <begin position="125"/>
        <end position="127"/>
    </location>
    <ligand>
        <name>phosphate</name>
        <dbReference type="ChEBI" id="CHEBI:43474"/>
        <note>substrate</note>
    </ligand>
</feature>
<sequence>MKRPSGRAADQLRSIRITRNYTKHAEGSVLVEFGDTKVICTVSVENGVPRFLKGQGQGWLTAEYGMLPRATGERNQREASRGKQGGRTLEIQRLIGRSLRAALDMSKLGDLTLYVDCDVIQADGGTRTASITGAMVALVDALKVIKKRGGLKGGDPLKQMIGAVSVGMYQGEPVLDLDYLEDSAAETDLNVVMTSTGGFIEVQGTAEGAPFQPEELNAMLELAKKGMNEIFELQKAALAD</sequence>